<protein>
    <recommendedName>
        <fullName>Apolipoprotein A-I</fullName>
        <shortName>Apo-AI</shortName>
        <shortName>ApoA-I</shortName>
    </recommendedName>
    <alternativeName>
        <fullName>Apolipoprotein A1</fullName>
    </alternativeName>
    <component>
        <recommendedName>
            <fullName>Proapolipoprotein A-I</fullName>
            <shortName>ProapoA-I</shortName>
        </recommendedName>
    </component>
    <component>
        <recommendedName>
            <fullName>Truncated apolipoprotein A-I</fullName>
        </recommendedName>
    </component>
</protein>
<feature type="signal peptide" evidence="1">
    <location>
        <begin position="1"/>
        <end position="18"/>
    </location>
</feature>
<feature type="chain" id="PRO_0000425325" description="Proapolipoprotein A-I">
    <location>
        <begin position="19"/>
        <end position="264"/>
    </location>
</feature>
<feature type="chain" id="PRO_0000001944" description="Apolipoprotein A-I">
    <location>
        <begin position="25"/>
        <end position="264"/>
    </location>
</feature>
<feature type="chain" id="PRO_0000416575" description="Truncated apolipoprotein A-I" evidence="1">
    <location>
        <begin position="25"/>
        <end position="263"/>
    </location>
</feature>
<feature type="repeat" description="1">
    <location>
        <begin position="67"/>
        <end position="88"/>
    </location>
</feature>
<feature type="repeat" description="2">
    <location>
        <begin position="89"/>
        <end position="110"/>
    </location>
</feature>
<feature type="repeat" description="3; half-length">
    <location>
        <begin position="111"/>
        <end position="121"/>
    </location>
</feature>
<feature type="repeat" description="4">
    <location>
        <begin position="122"/>
        <end position="143"/>
    </location>
</feature>
<feature type="repeat" description="5">
    <location>
        <begin position="144"/>
        <end position="165"/>
    </location>
</feature>
<feature type="repeat" description="6">
    <location>
        <begin position="166"/>
        <end position="187"/>
    </location>
</feature>
<feature type="repeat" description="7">
    <location>
        <begin position="188"/>
        <end position="207"/>
    </location>
</feature>
<feature type="repeat" description="8">
    <location>
        <begin position="208"/>
        <end position="229"/>
    </location>
</feature>
<feature type="repeat" description="9; half-length">
    <location>
        <begin position="230"/>
        <end position="240"/>
    </location>
</feature>
<feature type="repeat" description="10">
    <location>
        <begin position="241"/>
        <end position="264"/>
    </location>
</feature>
<feature type="region of interest" description="10 X approximate tandem repeats">
    <location>
        <begin position="67"/>
        <end position="264"/>
    </location>
</feature>
<feature type="modified residue" description="Methionine sulfoxide" evidence="1">
    <location>
        <position position="109"/>
    </location>
</feature>
<feature type="modified residue" description="Methionine sulfoxide" evidence="1">
    <location>
        <position position="193"/>
    </location>
</feature>
<feature type="modified residue" description="Methionine sulfoxide" evidence="1">
    <location>
        <position position="240"/>
    </location>
</feature>
<organism>
    <name type="scientific">Mesocricetus auratus</name>
    <name type="common">Golden hamster</name>
    <dbReference type="NCBI Taxonomy" id="10036"/>
    <lineage>
        <taxon>Eukaryota</taxon>
        <taxon>Metazoa</taxon>
        <taxon>Chordata</taxon>
        <taxon>Craniata</taxon>
        <taxon>Vertebrata</taxon>
        <taxon>Euteleostomi</taxon>
        <taxon>Mammalia</taxon>
        <taxon>Eutheria</taxon>
        <taxon>Euarchontoglires</taxon>
        <taxon>Glires</taxon>
        <taxon>Rodentia</taxon>
        <taxon>Myomorpha</taxon>
        <taxon>Muroidea</taxon>
        <taxon>Cricetidae</taxon>
        <taxon>Cricetinae</taxon>
        <taxon>Mesocricetus</taxon>
    </lineage>
</organism>
<keyword id="KW-0153">Cholesterol metabolism</keyword>
<keyword id="KW-0325">Glycoprotein</keyword>
<keyword id="KW-0345">HDL</keyword>
<keyword id="KW-0443">Lipid metabolism</keyword>
<keyword id="KW-0445">Lipid transport</keyword>
<keyword id="KW-0449">Lipoprotein</keyword>
<keyword id="KW-0558">Oxidation</keyword>
<keyword id="KW-0564">Palmitate</keyword>
<keyword id="KW-0597">Phosphoprotein</keyword>
<keyword id="KW-1185">Reference proteome</keyword>
<keyword id="KW-0677">Repeat</keyword>
<keyword id="KW-0964">Secreted</keyword>
<keyword id="KW-0732">Signal</keyword>
<keyword id="KW-0753">Steroid metabolism</keyword>
<keyword id="KW-1207">Sterol metabolism</keyword>
<keyword id="KW-0813">Transport</keyword>
<reference key="1">
    <citation type="journal article" date="1998" name="Am. J. Physiol.">
        <title>Zinc deficiency decreases plasma level and hepatic mRNA abundance of apolipoprotein A-I in rats and hamsters.</title>
        <authorList>
            <person name="Wu J.Y."/>
            <person name="Reaves S.K."/>
            <person name="Wang Y.R."/>
            <person name="Wu Y."/>
            <person name="Lei P.P."/>
            <person name="Lei K.Y."/>
        </authorList>
    </citation>
    <scope>NUCLEOTIDE SEQUENCE [MRNA]</scope>
    <source>
        <strain>Syrian</strain>
        <tissue>Intestine</tissue>
    </source>
</reference>
<sequence length="264" mass="30739">MKTVVLAVAVLFLTGSQARHFWQRDDPQTPWDRVKDFATVYVDAVKDSGREYVSQFETSALGKQLNLNLLENWDTLGSTVGRLQEQLGPVTQEFWDNLEKETEWLRREMNKDLEEVKAKVQPYLDQFQTKWQEEVALYRQKMEPLGAELRDGARQKLQELQEKLTPLGEDLRDRMRHHVDALRTKMTPYSDQMRDRLAERLAQLKDSPTLAEYHTKAADHLKAFGEKAKPALEDLRQGLMPVFESFKTRIMSMVEEASKKLNAQ</sequence>
<comment type="function">
    <text>Participates in the reverse transport of cholesterol from tissues to the liver for excretion by promoting cholesterol efflux from tissues and by acting as a cofactor for the lecithin cholesterol acyltransferase (LCAT). As part of the SPAP complex, activates spermatozoa motility.</text>
</comment>
<comment type="subunit">
    <text evidence="2 3 4">Homodimer (By similarity). Interacts with APOA1BP and CLU. Component of a sperm activating protein complex (SPAP), consisting of APOA1, an immunoglobulin heavy chain, an immunoglobulin light chain and albumin. Interacts with NDRG1. Interacts with SCGB3A2 (By similarity). Interacts with NAXE and YJEFN3 (By similarity).</text>
</comment>
<comment type="subcellular location">
    <subcellularLocation>
        <location>Secreted</location>
    </subcellularLocation>
</comment>
<comment type="tissue specificity">
    <text>Major protein of plasma HDL, also found in chylomicrons.</text>
</comment>
<comment type="PTM">
    <text evidence="1">Glycosylated.</text>
</comment>
<comment type="PTM">
    <text evidence="1">Palmitoylated.</text>
</comment>
<comment type="PTM">
    <text evidence="1">Phosphorylation sites are present in the extracellular medium.</text>
</comment>
<comment type="similarity">
    <text evidence="5">Belongs to the apolipoprotein A1/A4/E family.</text>
</comment>
<gene>
    <name type="primary">APOAI</name>
</gene>
<evidence type="ECO:0000250" key="1"/>
<evidence type="ECO:0000250" key="2">
    <source>
        <dbReference type="UniProtKB" id="G5BQH5"/>
    </source>
</evidence>
<evidence type="ECO:0000250" key="3">
    <source>
        <dbReference type="UniProtKB" id="P02647"/>
    </source>
</evidence>
<evidence type="ECO:0000250" key="4">
    <source>
        <dbReference type="UniProtKB" id="P04639"/>
    </source>
</evidence>
<evidence type="ECO:0000305" key="5"/>
<name>APOA1_MESAU</name>
<dbReference type="EMBL" id="AF046919">
    <property type="protein sequence ID" value="AAC98484.1"/>
    <property type="molecule type" value="mRNA"/>
</dbReference>
<dbReference type="RefSeq" id="NP_001268586.1">
    <property type="nucleotide sequence ID" value="NM_001281657.1"/>
</dbReference>
<dbReference type="SMR" id="Q9Z2L4"/>
<dbReference type="STRING" id="10036.ENSMAUP00000019954"/>
<dbReference type="Ensembl" id="ENSMAUT00000023940">
    <property type="protein sequence ID" value="ENSMAUP00000019954"/>
    <property type="gene ID" value="ENSMAUG00000018114"/>
</dbReference>
<dbReference type="GeneID" id="101841336"/>
<dbReference type="KEGG" id="maua:101841336"/>
<dbReference type="CTD" id="335"/>
<dbReference type="eggNOG" id="ENOG502S1XQ">
    <property type="taxonomic scope" value="Eukaryota"/>
</dbReference>
<dbReference type="OrthoDB" id="8727817at2759"/>
<dbReference type="Proteomes" id="UP000189706">
    <property type="component" value="Unplaced"/>
</dbReference>
<dbReference type="GO" id="GO:0042627">
    <property type="term" value="C:chylomicron"/>
    <property type="evidence" value="ECO:0007669"/>
    <property type="project" value="TreeGrafter"/>
</dbReference>
<dbReference type="GO" id="GO:0030139">
    <property type="term" value="C:endocytic vesicle"/>
    <property type="evidence" value="ECO:0007669"/>
    <property type="project" value="Ensembl"/>
</dbReference>
<dbReference type="GO" id="GO:1903561">
    <property type="term" value="C:extracellular vesicle"/>
    <property type="evidence" value="ECO:0007669"/>
    <property type="project" value="TreeGrafter"/>
</dbReference>
<dbReference type="GO" id="GO:0034362">
    <property type="term" value="C:low-density lipoprotein particle"/>
    <property type="evidence" value="ECO:0007669"/>
    <property type="project" value="TreeGrafter"/>
</dbReference>
<dbReference type="GO" id="GO:0034366">
    <property type="term" value="C:spherical high-density lipoprotein particle"/>
    <property type="evidence" value="ECO:0007669"/>
    <property type="project" value="Ensembl"/>
</dbReference>
<dbReference type="GO" id="GO:0034361">
    <property type="term" value="C:very-low-density lipoprotein particle"/>
    <property type="evidence" value="ECO:0007669"/>
    <property type="project" value="Ensembl"/>
</dbReference>
<dbReference type="GO" id="GO:0001540">
    <property type="term" value="F:amyloid-beta binding"/>
    <property type="evidence" value="ECO:0007669"/>
    <property type="project" value="Ensembl"/>
</dbReference>
<dbReference type="GO" id="GO:0034191">
    <property type="term" value="F:apolipoprotein A-I receptor binding"/>
    <property type="evidence" value="ECO:0007669"/>
    <property type="project" value="Ensembl"/>
</dbReference>
<dbReference type="GO" id="GO:0045499">
    <property type="term" value="F:chemorepellent activity"/>
    <property type="evidence" value="ECO:0007669"/>
    <property type="project" value="Ensembl"/>
</dbReference>
<dbReference type="GO" id="GO:0015485">
    <property type="term" value="F:cholesterol binding"/>
    <property type="evidence" value="ECO:0007669"/>
    <property type="project" value="Ensembl"/>
</dbReference>
<dbReference type="GO" id="GO:0120020">
    <property type="term" value="F:cholesterol transfer activity"/>
    <property type="evidence" value="ECO:0007669"/>
    <property type="project" value="Ensembl"/>
</dbReference>
<dbReference type="GO" id="GO:0019899">
    <property type="term" value="F:enzyme binding"/>
    <property type="evidence" value="ECO:0007669"/>
    <property type="project" value="Ensembl"/>
</dbReference>
<dbReference type="GO" id="GO:0031072">
    <property type="term" value="F:heat shock protein binding"/>
    <property type="evidence" value="ECO:0007669"/>
    <property type="project" value="Ensembl"/>
</dbReference>
<dbReference type="GO" id="GO:0008035">
    <property type="term" value="F:high-density lipoprotein particle binding"/>
    <property type="evidence" value="ECO:0007669"/>
    <property type="project" value="Ensembl"/>
</dbReference>
<dbReference type="GO" id="GO:0070653">
    <property type="term" value="F:high-density lipoprotein particle receptor binding"/>
    <property type="evidence" value="ECO:0007669"/>
    <property type="project" value="Ensembl"/>
</dbReference>
<dbReference type="GO" id="GO:0060228">
    <property type="term" value="F:phosphatidylcholine-sterol O-acyltransferase activator activity"/>
    <property type="evidence" value="ECO:0007669"/>
    <property type="project" value="Ensembl"/>
</dbReference>
<dbReference type="GO" id="GO:0005543">
    <property type="term" value="F:phospholipid binding"/>
    <property type="evidence" value="ECO:0007669"/>
    <property type="project" value="Ensembl"/>
</dbReference>
<dbReference type="GO" id="GO:0042803">
    <property type="term" value="F:protein homodimerization activity"/>
    <property type="evidence" value="ECO:0000250"/>
    <property type="project" value="UniProtKB"/>
</dbReference>
<dbReference type="GO" id="GO:0030325">
    <property type="term" value="P:adrenal gland development"/>
    <property type="evidence" value="ECO:0007669"/>
    <property type="project" value="Ensembl"/>
</dbReference>
<dbReference type="GO" id="GO:0034205">
    <property type="term" value="P:amyloid-beta formation"/>
    <property type="evidence" value="ECO:0007669"/>
    <property type="project" value="Ensembl"/>
</dbReference>
<dbReference type="GO" id="GO:0043534">
    <property type="term" value="P:blood vessel endothelial cell migration"/>
    <property type="evidence" value="ECO:0007669"/>
    <property type="project" value="Ensembl"/>
</dbReference>
<dbReference type="GO" id="GO:0071402">
    <property type="term" value="P:cellular response to lipoprotein particle stimulus"/>
    <property type="evidence" value="ECO:0007669"/>
    <property type="project" value="Ensembl"/>
</dbReference>
<dbReference type="GO" id="GO:0006695">
    <property type="term" value="P:cholesterol biosynthetic process"/>
    <property type="evidence" value="ECO:0007669"/>
    <property type="project" value="Ensembl"/>
</dbReference>
<dbReference type="GO" id="GO:0033344">
    <property type="term" value="P:cholesterol efflux"/>
    <property type="evidence" value="ECO:0007669"/>
    <property type="project" value="Ensembl"/>
</dbReference>
<dbReference type="GO" id="GO:0042632">
    <property type="term" value="P:cholesterol homeostasis"/>
    <property type="evidence" value="ECO:0007669"/>
    <property type="project" value="Ensembl"/>
</dbReference>
<dbReference type="GO" id="GO:0070508">
    <property type="term" value="P:cholesterol import"/>
    <property type="evidence" value="ECO:0007669"/>
    <property type="project" value="Ensembl"/>
</dbReference>
<dbReference type="GO" id="GO:0001935">
    <property type="term" value="P:endothelial cell proliferation"/>
    <property type="evidence" value="ECO:0007669"/>
    <property type="project" value="Ensembl"/>
</dbReference>
<dbReference type="GO" id="GO:0007186">
    <property type="term" value="P:G protein-coupled receptor signaling pathway"/>
    <property type="evidence" value="ECO:0007669"/>
    <property type="project" value="Ensembl"/>
</dbReference>
<dbReference type="GO" id="GO:0008211">
    <property type="term" value="P:glucocorticoid metabolic process"/>
    <property type="evidence" value="ECO:0007669"/>
    <property type="project" value="Ensembl"/>
</dbReference>
<dbReference type="GO" id="GO:0034380">
    <property type="term" value="P:high-density lipoprotein particle assembly"/>
    <property type="evidence" value="ECO:0007669"/>
    <property type="project" value="Ensembl"/>
</dbReference>
<dbReference type="GO" id="GO:0034375">
    <property type="term" value="P:high-density lipoprotein particle remodeling"/>
    <property type="evidence" value="ECO:0007669"/>
    <property type="project" value="Ensembl"/>
</dbReference>
<dbReference type="GO" id="GO:0007229">
    <property type="term" value="P:integrin-mediated signaling pathway"/>
    <property type="evidence" value="ECO:0007669"/>
    <property type="project" value="Ensembl"/>
</dbReference>
<dbReference type="GO" id="GO:0019915">
    <property type="term" value="P:lipid storage"/>
    <property type="evidence" value="ECO:0007669"/>
    <property type="project" value="Ensembl"/>
</dbReference>
<dbReference type="GO" id="GO:0042158">
    <property type="term" value="P:lipoprotein biosynthetic process"/>
    <property type="evidence" value="ECO:0007669"/>
    <property type="project" value="Ensembl"/>
</dbReference>
<dbReference type="GO" id="GO:0060354">
    <property type="term" value="P:negative regulation of cell adhesion molecule production"/>
    <property type="evidence" value="ECO:0007669"/>
    <property type="project" value="Ensembl"/>
</dbReference>
<dbReference type="GO" id="GO:0002719">
    <property type="term" value="P:negative regulation of cytokine production involved in immune response"/>
    <property type="evidence" value="ECO:0007669"/>
    <property type="project" value="Ensembl"/>
</dbReference>
<dbReference type="GO" id="GO:0034115">
    <property type="term" value="P:negative regulation of heterotypic cell-cell adhesion"/>
    <property type="evidence" value="ECO:0007669"/>
    <property type="project" value="Ensembl"/>
</dbReference>
<dbReference type="GO" id="GO:0050728">
    <property type="term" value="P:negative regulation of inflammatory response"/>
    <property type="evidence" value="ECO:0007669"/>
    <property type="project" value="Ensembl"/>
</dbReference>
<dbReference type="GO" id="GO:0032691">
    <property type="term" value="P:negative regulation of interleukin-1 beta production"/>
    <property type="evidence" value="ECO:0007669"/>
    <property type="project" value="Ensembl"/>
</dbReference>
<dbReference type="GO" id="GO:0010804">
    <property type="term" value="P:negative regulation of tumor necrosis factor-mediated signaling pathway"/>
    <property type="evidence" value="ECO:0007669"/>
    <property type="project" value="Ensembl"/>
</dbReference>
<dbReference type="GO" id="GO:0010903">
    <property type="term" value="P:negative regulation of very-low-density lipoprotein particle remodeling"/>
    <property type="evidence" value="ECO:0007669"/>
    <property type="project" value="Ensembl"/>
</dbReference>
<dbReference type="GO" id="GO:0018206">
    <property type="term" value="P:peptidyl-methionine modification"/>
    <property type="evidence" value="ECO:0000250"/>
    <property type="project" value="UniProtKB"/>
</dbReference>
<dbReference type="GO" id="GO:0006656">
    <property type="term" value="P:phosphatidylcholine biosynthetic process"/>
    <property type="evidence" value="ECO:0007669"/>
    <property type="project" value="Ensembl"/>
</dbReference>
<dbReference type="GO" id="GO:0033700">
    <property type="term" value="P:phospholipid efflux"/>
    <property type="evidence" value="ECO:0007669"/>
    <property type="project" value="Ensembl"/>
</dbReference>
<dbReference type="GO" id="GO:0055091">
    <property type="term" value="P:phospholipid homeostasis"/>
    <property type="evidence" value="ECO:0007669"/>
    <property type="project" value="Ensembl"/>
</dbReference>
<dbReference type="GO" id="GO:0010875">
    <property type="term" value="P:positive regulation of cholesterol efflux"/>
    <property type="evidence" value="ECO:0000250"/>
    <property type="project" value="UniProtKB"/>
</dbReference>
<dbReference type="GO" id="GO:0090205">
    <property type="term" value="P:positive regulation of cholesterol metabolic process"/>
    <property type="evidence" value="ECO:0007669"/>
    <property type="project" value="Ensembl"/>
</dbReference>
<dbReference type="GO" id="GO:0050766">
    <property type="term" value="P:positive regulation of phagocytosis"/>
    <property type="evidence" value="ECO:0000250"/>
    <property type="project" value="UniProtKB"/>
</dbReference>
<dbReference type="GO" id="GO:1902995">
    <property type="term" value="P:positive regulation of phospholipid efflux"/>
    <property type="evidence" value="ECO:0000250"/>
    <property type="project" value="UniProtKB"/>
</dbReference>
<dbReference type="GO" id="GO:0035025">
    <property type="term" value="P:positive regulation of Rho protein signal transduction"/>
    <property type="evidence" value="ECO:0007669"/>
    <property type="project" value="Ensembl"/>
</dbReference>
<dbReference type="GO" id="GO:0051496">
    <property type="term" value="P:positive regulation of stress fiber assembly"/>
    <property type="evidence" value="ECO:0007669"/>
    <property type="project" value="Ensembl"/>
</dbReference>
<dbReference type="GO" id="GO:1900026">
    <property type="term" value="P:positive regulation of substrate adhesion-dependent cell spreading"/>
    <property type="evidence" value="ECO:0007669"/>
    <property type="project" value="Ensembl"/>
</dbReference>
<dbReference type="GO" id="GO:0018158">
    <property type="term" value="P:protein oxidation"/>
    <property type="evidence" value="ECO:0000250"/>
    <property type="project" value="UniProtKB"/>
</dbReference>
<dbReference type="GO" id="GO:0050821">
    <property type="term" value="P:protein stabilization"/>
    <property type="evidence" value="ECO:0000250"/>
    <property type="project" value="UniProtKB"/>
</dbReference>
<dbReference type="GO" id="GO:0032489">
    <property type="term" value="P:regulation of Cdc42 protein signal transduction"/>
    <property type="evidence" value="ECO:0007669"/>
    <property type="project" value="Ensembl"/>
</dbReference>
<dbReference type="GO" id="GO:0030300">
    <property type="term" value="P:regulation of intestinal cholesterol absorption"/>
    <property type="evidence" value="ECO:0007669"/>
    <property type="project" value="Ensembl"/>
</dbReference>
<dbReference type="GO" id="GO:0043691">
    <property type="term" value="P:reverse cholesterol transport"/>
    <property type="evidence" value="ECO:0007669"/>
    <property type="project" value="Ensembl"/>
</dbReference>
<dbReference type="GO" id="GO:0070328">
    <property type="term" value="P:triglyceride homeostasis"/>
    <property type="evidence" value="ECO:0007669"/>
    <property type="project" value="Ensembl"/>
</dbReference>
<dbReference type="GO" id="GO:0051180">
    <property type="term" value="P:vitamin transport"/>
    <property type="evidence" value="ECO:0007669"/>
    <property type="project" value="Ensembl"/>
</dbReference>
<dbReference type="FunFam" id="1.20.120.20:FF:000001">
    <property type="entry name" value="Apolipoprotein A-I"/>
    <property type="match status" value="1"/>
</dbReference>
<dbReference type="FunFam" id="1.20.5.20:FF:000001">
    <property type="entry name" value="apolipoprotein A-I"/>
    <property type="match status" value="1"/>
</dbReference>
<dbReference type="Gene3D" id="1.20.5.20">
    <property type="match status" value="1"/>
</dbReference>
<dbReference type="Gene3D" id="6.10.140.380">
    <property type="match status" value="1"/>
</dbReference>
<dbReference type="Gene3D" id="1.20.120.20">
    <property type="entry name" value="Apolipoprotein"/>
    <property type="match status" value="1"/>
</dbReference>
<dbReference type="InterPro" id="IPR000074">
    <property type="entry name" value="ApoA_E"/>
</dbReference>
<dbReference type="InterPro" id="IPR050163">
    <property type="entry name" value="Apolipoprotein_A1/A4/E"/>
</dbReference>
<dbReference type="PANTHER" id="PTHR18976">
    <property type="entry name" value="APOLIPOPROTEIN"/>
    <property type="match status" value="1"/>
</dbReference>
<dbReference type="PANTHER" id="PTHR18976:SF11">
    <property type="entry name" value="APOLIPOPROTEIN A-I"/>
    <property type="match status" value="1"/>
</dbReference>
<dbReference type="Pfam" id="PF01442">
    <property type="entry name" value="Apolipoprotein"/>
    <property type="match status" value="1"/>
</dbReference>
<dbReference type="SUPFAM" id="SSF58113">
    <property type="entry name" value="Apolipoprotein A-I"/>
    <property type="match status" value="1"/>
</dbReference>
<proteinExistence type="evidence at transcript level"/>
<accession>Q9Z2L4</accession>